<feature type="chain" id="PRO_0000391559" description="CASP-like protein 1E1">
    <location>
        <begin position="1"/>
        <end position="192"/>
    </location>
</feature>
<feature type="topological domain" description="Cytoplasmic" evidence="2">
    <location>
        <begin position="1"/>
        <end position="29"/>
    </location>
</feature>
<feature type="transmembrane region" description="Helical" evidence="2">
    <location>
        <begin position="30"/>
        <end position="50"/>
    </location>
</feature>
<feature type="topological domain" description="Extracellular" evidence="2">
    <location>
        <begin position="51"/>
        <end position="81"/>
    </location>
</feature>
<feature type="transmembrane region" description="Helical" evidence="2">
    <location>
        <begin position="82"/>
        <end position="102"/>
    </location>
</feature>
<feature type="topological domain" description="Cytoplasmic" evidence="2">
    <location>
        <begin position="103"/>
        <end position="118"/>
    </location>
</feature>
<feature type="transmembrane region" description="Helical" evidence="2">
    <location>
        <begin position="119"/>
        <end position="139"/>
    </location>
</feature>
<feature type="topological domain" description="Extracellular" evidence="2">
    <location>
        <begin position="140"/>
        <end position="161"/>
    </location>
</feature>
<feature type="transmembrane region" description="Helical" evidence="2">
    <location>
        <begin position="162"/>
        <end position="182"/>
    </location>
</feature>
<feature type="topological domain" description="Cytoplasmic" evidence="2">
    <location>
        <begin position="183"/>
        <end position="192"/>
    </location>
</feature>
<feature type="region of interest" description="Disordered" evidence="3">
    <location>
        <begin position="1"/>
        <end position="22"/>
    </location>
</feature>
<feature type="glycosylation site" description="N-linked (GlcNAc...) asparagine" evidence="2">
    <location>
        <position position="52"/>
    </location>
</feature>
<proteinExistence type="evidence at transcript level"/>
<protein>
    <recommendedName>
        <fullName>CASP-like protein 1E1</fullName>
        <shortName>RcCASPL1E1</shortName>
    </recommendedName>
</protein>
<gene>
    <name type="ORF">RCOM_0680180</name>
</gene>
<dbReference type="EMBL" id="EQ973812">
    <property type="protein sequence ID" value="EEF45487.1"/>
    <property type="molecule type" value="Genomic_DNA"/>
</dbReference>
<dbReference type="SMR" id="B9RT04"/>
<dbReference type="FunCoup" id="B9RT04">
    <property type="interactions" value="300"/>
</dbReference>
<dbReference type="STRING" id="3988.B9RT04"/>
<dbReference type="eggNOG" id="ENOG502RZNK">
    <property type="taxonomic scope" value="Eukaryota"/>
</dbReference>
<dbReference type="InParanoid" id="B9RT04"/>
<dbReference type="Proteomes" id="UP000008311">
    <property type="component" value="Unassembled WGS sequence"/>
</dbReference>
<dbReference type="GO" id="GO:0005886">
    <property type="term" value="C:plasma membrane"/>
    <property type="evidence" value="ECO:0000318"/>
    <property type="project" value="GO_Central"/>
</dbReference>
<dbReference type="InterPro" id="IPR006459">
    <property type="entry name" value="CASP/CASPL"/>
</dbReference>
<dbReference type="InterPro" id="IPR006702">
    <property type="entry name" value="CASP_dom"/>
</dbReference>
<dbReference type="InterPro" id="IPR044173">
    <property type="entry name" value="CASPL"/>
</dbReference>
<dbReference type="NCBIfam" id="TIGR01569">
    <property type="entry name" value="A_tha_TIGR01569"/>
    <property type="match status" value="1"/>
</dbReference>
<dbReference type="PANTHER" id="PTHR36488">
    <property type="entry name" value="CASP-LIKE PROTEIN 1U1"/>
    <property type="match status" value="1"/>
</dbReference>
<dbReference type="PANTHER" id="PTHR36488:SF8">
    <property type="entry name" value="CASP-LIKE PROTEIN 1U1"/>
    <property type="match status" value="1"/>
</dbReference>
<dbReference type="Pfam" id="PF04535">
    <property type="entry name" value="CASP_dom"/>
    <property type="match status" value="1"/>
</dbReference>
<sequence length="192" mass="20727">MDSQNKNSVDAMDGIESRGMKERGGRTNSFLVLRVLAFVLTSTAAIVHGVNNQTETVPIQLTSSMPPLYVPVVAKWHYLSAFVFFVVSNAIACSYAAISVMLSFCGKKSMVPIILTLDLLMVALLFSSNGAATAIGVMGYKGNSHVKWNKVCNVFGKFCNQVAASVVLSLIGSIVFVLLVMLTAFRLHNKSK</sequence>
<comment type="subunit">
    <text evidence="1">Homodimer and heterodimers.</text>
</comment>
<comment type="subcellular location">
    <subcellularLocation>
        <location evidence="1">Cell membrane</location>
        <topology evidence="1">Multi-pass membrane protein</topology>
    </subcellularLocation>
</comment>
<comment type="similarity">
    <text evidence="4">Belongs to the Casparian strip membrane proteins (CASP) family.</text>
</comment>
<reference key="1">
    <citation type="journal article" date="2010" name="Nat. Biotechnol.">
        <title>Draft genome sequence of the oilseed species Ricinus communis.</title>
        <authorList>
            <person name="Chan A.P."/>
            <person name="Crabtree J."/>
            <person name="Zhao Q."/>
            <person name="Lorenzi H."/>
            <person name="Orvis J."/>
            <person name="Puiu D."/>
            <person name="Melake-Berhan A."/>
            <person name="Jones K.M."/>
            <person name="Redman J."/>
            <person name="Chen G."/>
            <person name="Cahoon E.B."/>
            <person name="Gedil M."/>
            <person name="Stanke M."/>
            <person name="Haas B.J."/>
            <person name="Wortman J.R."/>
            <person name="Fraser-Liggett C.M."/>
            <person name="Ravel J."/>
            <person name="Rabinowicz P.D."/>
        </authorList>
    </citation>
    <scope>NUCLEOTIDE SEQUENCE [LARGE SCALE GENOMIC DNA]</scope>
    <source>
        <strain>cv. Hale</strain>
    </source>
</reference>
<reference key="2">
    <citation type="journal article" date="2014" name="Plant Physiol.">
        <title>Functional and evolutionary analysis of the CASPARIAN STRIP MEMBRANE DOMAIN PROTEIN family.</title>
        <authorList>
            <person name="Roppolo D."/>
            <person name="Boeckmann B."/>
            <person name="Pfister A."/>
            <person name="Boutet E."/>
            <person name="Rubio M.C."/>
            <person name="Denervaud-Tendon V."/>
            <person name="Vermeer J.E."/>
            <person name="Gheyselinck J."/>
            <person name="Xenarios I."/>
            <person name="Geldner N."/>
        </authorList>
    </citation>
    <scope>GENE FAMILY</scope>
    <scope>NOMENCLATURE</scope>
</reference>
<organism>
    <name type="scientific">Ricinus communis</name>
    <name type="common">Castor bean</name>
    <dbReference type="NCBI Taxonomy" id="3988"/>
    <lineage>
        <taxon>Eukaryota</taxon>
        <taxon>Viridiplantae</taxon>
        <taxon>Streptophyta</taxon>
        <taxon>Embryophyta</taxon>
        <taxon>Tracheophyta</taxon>
        <taxon>Spermatophyta</taxon>
        <taxon>Magnoliopsida</taxon>
        <taxon>eudicotyledons</taxon>
        <taxon>Gunneridae</taxon>
        <taxon>Pentapetalae</taxon>
        <taxon>rosids</taxon>
        <taxon>fabids</taxon>
        <taxon>Malpighiales</taxon>
        <taxon>Euphorbiaceae</taxon>
        <taxon>Acalyphoideae</taxon>
        <taxon>Acalypheae</taxon>
        <taxon>Ricinus</taxon>
    </lineage>
</organism>
<evidence type="ECO:0000250" key="1"/>
<evidence type="ECO:0000255" key="2"/>
<evidence type="ECO:0000256" key="3">
    <source>
        <dbReference type="SAM" id="MobiDB-lite"/>
    </source>
</evidence>
<evidence type="ECO:0000305" key="4"/>
<accession>B9RT04</accession>
<keyword id="KW-1003">Cell membrane</keyword>
<keyword id="KW-0325">Glycoprotein</keyword>
<keyword id="KW-0472">Membrane</keyword>
<keyword id="KW-1185">Reference proteome</keyword>
<keyword id="KW-0812">Transmembrane</keyword>
<keyword id="KW-1133">Transmembrane helix</keyword>
<name>CSPL9_RICCO</name>